<feature type="chain" id="PRO_0000212780" description="Putative disease resistance protein RGA4">
    <location>
        <begin position="1"/>
        <end position="988"/>
    </location>
</feature>
<feature type="domain" description="NB-ARC">
    <location>
        <begin position="137"/>
        <end position="439"/>
    </location>
</feature>
<feature type="repeat" description="LRR 1">
    <location>
        <begin position="526"/>
        <end position="548"/>
    </location>
</feature>
<feature type="repeat" description="LRR 2">
    <location>
        <begin position="549"/>
        <end position="572"/>
    </location>
</feature>
<feature type="repeat" description="LRR 3">
    <location>
        <begin position="574"/>
        <end position="595"/>
    </location>
</feature>
<feature type="repeat" description="LRR 4">
    <location>
        <begin position="596"/>
        <end position="620"/>
    </location>
</feature>
<feature type="repeat" description="LRR 5">
    <location>
        <begin position="638"/>
        <end position="662"/>
    </location>
</feature>
<feature type="repeat" description="LRR 6">
    <location>
        <begin position="674"/>
        <end position="696"/>
    </location>
</feature>
<feature type="repeat" description="LRR 7">
    <location>
        <begin position="751"/>
        <end position="776"/>
    </location>
</feature>
<feature type="repeat" description="LRR 8">
    <location>
        <begin position="784"/>
        <end position="808"/>
    </location>
</feature>
<feature type="repeat" description="LRR 9">
    <location>
        <begin position="829"/>
        <end position="851"/>
    </location>
</feature>
<feature type="repeat" description="LRR 10">
    <location>
        <begin position="852"/>
        <end position="876"/>
    </location>
</feature>
<feature type="repeat" description="LRR 11">
    <location>
        <begin position="878"/>
        <end position="900"/>
    </location>
</feature>
<feature type="repeat" description="LRR 12">
    <location>
        <begin position="901"/>
        <end position="925"/>
    </location>
</feature>
<feature type="repeat" description="LRR 13">
    <location>
        <begin position="927"/>
        <end position="950"/>
    </location>
</feature>
<feature type="repeat" description="LRR 14">
    <location>
        <begin position="966"/>
        <end position="988"/>
    </location>
</feature>
<feature type="binding site" evidence="1">
    <location>
        <begin position="184"/>
        <end position="191"/>
    </location>
    <ligand>
        <name>ATP</name>
        <dbReference type="ChEBI" id="CHEBI:30616"/>
    </ligand>
</feature>
<feature type="sequence variant" description="In susceptible haplotype.">
    <original>L</original>
    <variation>V</variation>
    <location>
        <position position="45"/>
    </location>
</feature>
<feature type="sequence variant" description="In susceptible haplotype.">
    <original>S</original>
    <variation>A</variation>
    <location>
        <position position="120"/>
    </location>
</feature>
<feature type="sequence variant" description="In susceptible haplotype.">
    <original>L</original>
    <variation>S</variation>
    <location>
        <position position="305"/>
    </location>
</feature>
<feature type="sequence variant" description="In susceptible haplotype.">
    <original>A</original>
    <variation>S</variation>
    <location>
        <position position="512"/>
    </location>
</feature>
<feature type="sequence variant" description="In susceptible haplotype.">
    <original>K</original>
    <variation>E</variation>
    <location>
        <position position="692"/>
    </location>
</feature>
<feature type="sequence conflict" description="In Ref. 2." evidence="2" ref="2">
    <original>G</original>
    <variation>VGWQWGWARLEYKRLLLGVLMRIMSLRMHVSTCSTLYEFKFYLCTPKVGARRC</variation>
    <location>
        <position position="145"/>
    </location>
</feature>
<accession>Q7XA39</accession>
<accession>Q7XA32</accession>
<organism>
    <name type="scientific">Solanum bulbocastanum</name>
    <name type="common">Wild potato</name>
    <dbReference type="NCBI Taxonomy" id="147425"/>
    <lineage>
        <taxon>Eukaryota</taxon>
        <taxon>Viridiplantae</taxon>
        <taxon>Streptophyta</taxon>
        <taxon>Embryophyta</taxon>
        <taxon>Tracheophyta</taxon>
        <taxon>Spermatophyta</taxon>
        <taxon>Magnoliopsida</taxon>
        <taxon>eudicotyledons</taxon>
        <taxon>Gunneridae</taxon>
        <taxon>Pentapetalae</taxon>
        <taxon>asterids</taxon>
        <taxon>lamiids</taxon>
        <taxon>Solanales</taxon>
        <taxon>Solanaceae</taxon>
        <taxon>Solanoideae</taxon>
        <taxon>Solaneae</taxon>
        <taxon>Solanum</taxon>
    </lineage>
</organism>
<sequence>MAEAFLQVLLENLTSFIGDKLVLIFGFEKECEKLSSVFSTIQAVLQDAQEKQLKDKAIENWLQKLNSAAYEVDDILGECKNEAIRFEQSRLGFYHPGIINFRHKIGRRMKEIMEKLDAISEERRKFHFLEKITERQAAAATRETGFVLTEPKVYGRDKEEDEIVKILINNVNVAEELPVFPIIGMGGLGKTTLAQMIFNDERVTKHFNPKIWVCVSDDFDEKRLIKTIIGNIERSSPHVEDLASFQKKLQELLNGKRYLLVLDDVWNDDLEKWAKLRAVLTVGARGASILATTRLEKVGSIMGTLQPYHLSNLSPHDSLLLFMQRAFGQQKEANPNLVAIGKEIVKKCGGVPLAAKTLGGLLRFKREESEWEHVRDNEIWSLPQDESSILPALRLSYHHLPLDLRQCFAYCAVFPKDTKMIKENLITLWMAHGFLLSKGNLELEDVGNEVWNELYLRSFFQEIEAKSGNTYFKIHDLIHDLATSLFSASASCGNIREINVKDYKHTVSIGFAAVVSSYSPSLLKKFVSLRVLNLSYSKLEQLPSSIGDLLHLRYLDLSCNNFRSLPERLCKLQNLQTLDVHNCYSLNCLPKQTSKLSSLRHLVVDGCPLTSTPPRIGLLTCLKTLGFFIVGSKKGYQLGELKNLNLCGSISITHLERVKNDTDAEANLSAKANLQSLSMSWDNDGPNRYESKEVKVLEALKPHPNLKYLEIIAFGGFRFPSWINHSVLEKVISVRIKSCKNCLCLPPFGELPCLENLELQNGSAEVEYVEEDDVHSRFSTRRSFPSLKKLRIWFFRSLKGLMKEEGEEKFPMLEEMAILYCPLFVFPTLSSVKKLEVHGNTNTRGLSSISNLSTLTSLRIGANYRATSLPEEMFTSLTNLEFLSFFDFKNLKDLPTSLTSLNALKRLQIESCDSLESFPEQGLEGLTSLTQLFVKYCKMLKCLPEGLQHLTALTNLGVSGCPEVEKRCDKEIGEDWHKIAHIPNLDIH</sequence>
<reference key="1">
    <citation type="journal article" date="2003" name="Proc. Natl. Acad. Sci. U.S.A.">
        <title>Gene RB cloned from Solanum bulbocastanum confers broad spectrum resistance to potato late blight.</title>
        <authorList>
            <person name="Song J."/>
            <person name="Bradeen J.M."/>
            <person name="Naess S.K."/>
            <person name="Raasch J.A."/>
            <person name="Wielgus S.M."/>
            <person name="Haberlach G.T."/>
            <person name="Liu J."/>
            <person name="Kuang H."/>
            <person name="Austin-Phillips S."/>
            <person name="Buell C.R."/>
            <person name="Helgeson J.P."/>
            <person name="Jiang J."/>
        </authorList>
    </citation>
    <scope>NUCLEOTIDE SEQUENCE [GENOMIC DNA]</scope>
    <scope>VARIANTS</scope>
</reference>
<reference key="2">
    <citation type="journal article" date="2003" name="Plant J.">
        <title>An ancient R gene from the wild potato species Solanum bulbocastanum confers broad-spectrum resistance to Phytophthora infestans in cultivated potato and tomato.</title>
        <authorList>
            <person name="van der Vossen E."/>
            <person name="Sikkema A."/>
            <person name="Hekkert Bt B.L."/>
            <person name="Gros J."/>
            <person name="Stevens P."/>
            <person name="Muskens M."/>
            <person name="Wouters D."/>
            <person name="Pereira A."/>
            <person name="Stiekema W."/>
            <person name="Allefs S."/>
        </authorList>
    </citation>
    <scope>NUCLEOTIDE SEQUENCE [GENOMIC DNA]</scope>
</reference>
<proteinExistence type="evidence at transcript level"/>
<comment type="function">
    <text>Disease resistance protein. Resistance proteins guard the plant against pathogens that contain an appropriate avirulence protein via a direct or indirect interaction with this avirulence protein. That triggers a defense system which restricts the pathogen growth.</text>
</comment>
<comment type="induction">
    <text>Constitutively expressed.</text>
</comment>
<comment type="miscellaneous">
    <text>Belongs to a four-gene family located at the same locus. Although the four genes are expressed in the resistant haplotype, only RGA2 confers the resistance to P.infestans. In the susceptible haplotype, RGA1 and RGA3 are likely to be pseudogenes created by deletions and mutations, while RGA2 also contains several modifications.</text>
</comment>
<comment type="similarity">
    <text evidence="2">Belongs to the disease resistance NB-LRR family.</text>
</comment>
<dbReference type="EMBL" id="AY303170">
    <property type="protein sequence ID" value="AAP45166.1"/>
    <property type="molecule type" value="Genomic_DNA"/>
</dbReference>
<dbReference type="EMBL" id="AY303171">
    <property type="protein sequence ID" value="AAP45174.1"/>
    <property type="molecule type" value="Genomic_DNA"/>
</dbReference>
<dbReference type="EMBL" id="AY426262">
    <property type="protein sequence ID" value="AAR29072.1"/>
    <property type="molecule type" value="Genomic_DNA"/>
</dbReference>
<dbReference type="SMR" id="Q7XA39"/>
<dbReference type="GO" id="GO:0043531">
    <property type="term" value="F:ADP binding"/>
    <property type="evidence" value="ECO:0007669"/>
    <property type="project" value="InterPro"/>
</dbReference>
<dbReference type="GO" id="GO:0005524">
    <property type="term" value="F:ATP binding"/>
    <property type="evidence" value="ECO:0007669"/>
    <property type="project" value="UniProtKB-KW"/>
</dbReference>
<dbReference type="GO" id="GO:0098542">
    <property type="term" value="P:defense response to other organism"/>
    <property type="evidence" value="ECO:0007669"/>
    <property type="project" value="UniProtKB-ARBA"/>
</dbReference>
<dbReference type="CDD" id="cd14798">
    <property type="entry name" value="RX-CC_like"/>
    <property type="match status" value="1"/>
</dbReference>
<dbReference type="FunFam" id="3.40.50.300:FF:001091">
    <property type="entry name" value="Probable disease resistance protein At1g61300"/>
    <property type="match status" value="1"/>
</dbReference>
<dbReference type="FunFam" id="1.10.10.10:FF:000322">
    <property type="entry name" value="Probable disease resistance protein At1g63360"/>
    <property type="match status" value="1"/>
</dbReference>
<dbReference type="Gene3D" id="1.20.5.4130">
    <property type="match status" value="1"/>
</dbReference>
<dbReference type="Gene3D" id="1.10.8.430">
    <property type="entry name" value="Helical domain of apoptotic protease-activating factors"/>
    <property type="match status" value="1"/>
</dbReference>
<dbReference type="Gene3D" id="3.40.50.300">
    <property type="entry name" value="P-loop containing nucleotide triphosphate hydrolases"/>
    <property type="match status" value="1"/>
</dbReference>
<dbReference type="Gene3D" id="3.80.10.10">
    <property type="entry name" value="Ribonuclease Inhibitor"/>
    <property type="match status" value="2"/>
</dbReference>
<dbReference type="Gene3D" id="1.10.10.10">
    <property type="entry name" value="Winged helix-like DNA-binding domain superfamily/Winged helix DNA-binding domain"/>
    <property type="match status" value="1"/>
</dbReference>
<dbReference type="InterPro" id="IPR042197">
    <property type="entry name" value="Apaf_helical"/>
</dbReference>
<dbReference type="InterPro" id="IPR001611">
    <property type="entry name" value="Leu-rich_rpt"/>
</dbReference>
<dbReference type="InterPro" id="IPR003591">
    <property type="entry name" value="Leu-rich_rpt_typical-subtyp"/>
</dbReference>
<dbReference type="InterPro" id="IPR032675">
    <property type="entry name" value="LRR_dom_sf"/>
</dbReference>
<dbReference type="InterPro" id="IPR056789">
    <property type="entry name" value="LRR_R13L1-DRL21"/>
</dbReference>
<dbReference type="InterPro" id="IPR055414">
    <property type="entry name" value="LRR_R13L4/SHOC2-like"/>
</dbReference>
<dbReference type="InterPro" id="IPR002182">
    <property type="entry name" value="NB-ARC"/>
</dbReference>
<dbReference type="InterPro" id="IPR027417">
    <property type="entry name" value="P-loop_NTPase"/>
</dbReference>
<dbReference type="InterPro" id="IPR038005">
    <property type="entry name" value="RX-like_CC"/>
</dbReference>
<dbReference type="InterPro" id="IPR041118">
    <property type="entry name" value="Rx_N"/>
</dbReference>
<dbReference type="InterPro" id="IPR036388">
    <property type="entry name" value="WH-like_DNA-bd_sf"/>
</dbReference>
<dbReference type="PANTHER" id="PTHR36766:SF42">
    <property type="entry name" value="NB-ARC DOMAIN DISEASE RESISTANCE PROTEIN"/>
    <property type="match status" value="1"/>
</dbReference>
<dbReference type="PANTHER" id="PTHR36766">
    <property type="entry name" value="PLANT BROAD-SPECTRUM MILDEW RESISTANCE PROTEIN RPW8"/>
    <property type="match status" value="1"/>
</dbReference>
<dbReference type="Pfam" id="PF23598">
    <property type="entry name" value="LRR_14"/>
    <property type="match status" value="1"/>
</dbReference>
<dbReference type="Pfam" id="PF25019">
    <property type="entry name" value="LRR_R13L1-DRL21"/>
    <property type="match status" value="1"/>
</dbReference>
<dbReference type="Pfam" id="PF00931">
    <property type="entry name" value="NB-ARC"/>
    <property type="match status" value="1"/>
</dbReference>
<dbReference type="Pfam" id="PF18052">
    <property type="entry name" value="Rx_N"/>
    <property type="match status" value="1"/>
</dbReference>
<dbReference type="Pfam" id="PF23559">
    <property type="entry name" value="WH_DRP"/>
    <property type="match status" value="1"/>
</dbReference>
<dbReference type="PRINTS" id="PR00364">
    <property type="entry name" value="DISEASERSIST"/>
</dbReference>
<dbReference type="SMART" id="SM00369">
    <property type="entry name" value="LRR_TYP"/>
    <property type="match status" value="3"/>
</dbReference>
<dbReference type="SUPFAM" id="SSF52058">
    <property type="entry name" value="L domain-like"/>
    <property type="match status" value="1"/>
</dbReference>
<dbReference type="SUPFAM" id="SSF52540">
    <property type="entry name" value="P-loop containing nucleoside triphosphate hydrolases"/>
    <property type="match status" value="1"/>
</dbReference>
<dbReference type="SUPFAM" id="SSF52047">
    <property type="entry name" value="RNI-like"/>
    <property type="match status" value="1"/>
</dbReference>
<dbReference type="PROSITE" id="PS51450">
    <property type="entry name" value="LRR"/>
    <property type="match status" value="3"/>
</dbReference>
<evidence type="ECO:0000255" key="1"/>
<evidence type="ECO:0000305" key="2"/>
<protein>
    <recommendedName>
        <fullName>Putative disease resistance protein RGA4</fullName>
    </recommendedName>
    <alternativeName>
        <fullName>RGA4-blb</fullName>
    </alternativeName>
</protein>
<keyword id="KW-0067">ATP-binding</keyword>
<keyword id="KW-0433">Leucine-rich repeat</keyword>
<keyword id="KW-0547">Nucleotide-binding</keyword>
<keyword id="KW-0611">Plant defense</keyword>
<keyword id="KW-0677">Repeat</keyword>
<name>RGA4_SOLBU</name>
<gene>
    <name type="primary">RGA4</name>
    <name type="synonym">177O13.34</name>
    <name type="synonym">CB3A14.8</name>
</gene>